<sequence length="356" mass="38566">MSRPIVATINRAALRQNLAIARQAAGGSRLWSVVKANAYGHGIDRVWQSLAETDGFALLNLEEAILLRERGWKKPILLLEGFFHPADLEILDRYRLTTSVHSNWQIKALAEAKLSAPLDIYLKMNSGMNRLGFQPEQVNNAWQKLRSLKNVGELTLMAHFADAESTEGVAEPLKRIEQAAEGLECPRSLANSAATLWHPQTHHDWVRPGIILYGASPSGRWQDIAGSGLQPVMTLTSEIIGVQQLAAGSCVGYGSRYRASGSQRIGVVACGYADGYPRHAPTGTPIRVDGEMTQVVGAVSMDMITVDLTPCPQAGIGSQVELWGNSVKIDDVASASGTVGYELMCALAQRVPVQTE</sequence>
<evidence type="ECO:0000255" key="1">
    <source>
        <dbReference type="HAMAP-Rule" id="MF_01201"/>
    </source>
</evidence>
<keyword id="KW-0413">Isomerase</keyword>
<keyword id="KW-0663">Pyridoxal phosphate</keyword>
<keyword id="KW-1185">Reference proteome</keyword>
<gene>
    <name type="primary">alr</name>
    <name type="ordered locus">ETA_15450</name>
</gene>
<feature type="chain" id="PRO_1000138597" description="Alanine racemase">
    <location>
        <begin position="1"/>
        <end position="356"/>
    </location>
</feature>
<feature type="active site" description="Proton acceptor; specific for D-alanine" evidence="1">
    <location>
        <position position="35"/>
    </location>
</feature>
<feature type="active site" description="Proton acceptor; specific for L-alanine" evidence="1">
    <location>
        <position position="253"/>
    </location>
</feature>
<feature type="binding site" evidence="1">
    <location>
        <position position="130"/>
    </location>
    <ligand>
        <name>substrate</name>
    </ligand>
</feature>
<feature type="binding site" evidence="1">
    <location>
        <position position="301"/>
    </location>
    <ligand>
        <name>substrate</name>
    </ligand>
</feature>
<feature type="modified residue" description="N6-(pyridoxal phosphate)lysine" evidence="1">
    <location>
        <position position="35"/>
    </location>
</feature>
<name>ALR_ERWT9</name>
<accession>B2VJ52</accession>
<reference key="1">
    <citation type="journal article" date="2008" name="Environ. Microbiol.">
        <title>The genome of Erwinia tasmaniensis strain Et1/99, a non-pathogenic bacterium in the genus Erwinia.</title>
        <authorList>
            <person name="Kube M."/>
            <person name="Migdoll A.M."/>
            <person name="Mueller I."/>
            <person name="Kuhl H."/>
            <person name="Beck A."/>
            <person name="Reinhardt R."/>
            <person name="Geider K."/>
        </authorList>
    </citation>
    <scope>NUCLEOTIDE SEQUENCE [LARGE SCALE GENOMIC DNA]</scope>
    <source>
        <strain>DSM 17950 / CFBP 7177 / CIP 109463 / NCPPB 4357 / Et1/99</strain>
    </source>
</reference>
<comment type="function">
    <text evidence="1">Catalyzes the interconversion of L-alanine and D-alanine. May also act on other amino acids.</text>
</comment>
<comment type="catalytic activity">
    <reaction evidence="1">
        <text>L-alanine = D-alanine</text>
        <dbReference type="Rhea" id="RHEA:20249"/>
        <dbReference type="ChEBI" id="CHEBI:57416"/>
        <dbReference type="ChEBI" id="CHEBI:57972"/>
        <dbReference type="EC" id="5.1.1.1"/>
    </reaction>
</comment>
<comment type="cofactor">
    <cofactor evidence="1">
        <name>pyridoxal 5'-phosphate</name>
        <dbReference type="ChEBI" id="CHEBI:597326"/>
    </cofactor>
</comment>
<comment type="pathway">
    <text evidence="1">Amino-acid biosynthesis; D-alanine biosynthesis; D-alanine from L-alanine: step 1/1.</text>
</comment>
<comment type="similarity">
    <text evidence="1">Belongs to the alanine racemase family.</text>
</comment>
<proteinExistence type="inferred from homology"/>
<protein>
    <recommendedName>
        <fullName evidence="1">Alanine racemase</fullName>
        <ecNumber evidence="1">5.1.1.1</ecNumber>
    </recommendedName>
</protein>
<organism>
    <name type="scientific">Erwinia tasmaniensis (strain DSM 17950 / CFBP 7177 / CIP 109463 / NCPPB 4357 / Et1/99)</name>
    <dbReference type="NCBI Taxonomy" id="465817"/>
    <lineage>
        <taxon>Bacteria</taxon>
        <taxon>Pseudomonadati</taxon>
        <taxon>Pseudomonadota</taxon>
        <taxon>Gammaproteobacteria</taxon>
        <taxon>Enterobacterales</taxon>
        <taxon>Erwiniaceae</taxon>
        <taxon>Erwinia</taxon>
    </lineage>
</organism>
<dbReference type="EC" id="5.1.1.1" evidence="1"/>
<dbReference type="EMBL" id="CU468135">
    <property type="protein sequence ID" value="CAO96591.1"/>
    <property type="molecule type" value="Genomic_DNA"/>
</dbReference>
<dbReference type="RefSeq" id="WP_012441284.1">
    <property type="nucleotide sequence ID" value="NC_010694.1"/>
</dbReference>
<dbReference type="SMR" id="B2VJ52"/>
<dbReference type="STRING" id="465817.ETA_15450"/>
<dbReference type="KEGG" id="eta:ETA_15450"/>
<dbReference type="eggNOG" id="COG0787">
    <property type="taxonomic scope" value="Bacteria"/>
</dbReference>
<dbReference type="HOGENOM" id="CLU_028393_1_0_6"/>
<dbReference type="OrthoDB" id="9813814at2"/>
<dbReference type="UniPathway" id="UPA00042">
    <property type="reaction ID" value="UER00497"/>
</dbReference>
<dbReference type="Proteomes" id="UP000001726">
    <property type="component" value="Chromosome"/>
</dbReference>
<dbReference type="GO" id="GO:0005829">
    <property type="term" value="C:cytosol"/>
    <property type="evidence" value="ECO:0007669"/>
    <property type="project" value="TreeGrafter"/>
</dbReference>
<dbReference type="GO" id="GO:0008784">
    <property type="term" value="F:alanine racemase activity"/>
    <property type="evidence" value="ECO:0007669"/>
    <property type="project" value="UniProtKB-UniRule"/>
</dbReference>
<dbReference type="GO" id="GO:0030170">
    <property type="term" value="F:pyridoxal phosphate binding"/>
    <property type="evidence" value="ECO:0007669"/>
    <property type="project" value="UniProtKB-UniRule"/>
</dbReference>
<dbReference type="GO" id="GO:0030632">
    <property type="term" value="P:D-alanine biosynthetic process"/>
    <property type="evidence" value="ECO:0007669"/>
    <property type="project" value="UniProtKB-UniRule"/>
</dbReference>
<dbReference type="CDD" id="cd06827">
    <property type="entry name" value="PLPDE_III_AR_proteobact"/>
    <property type="match status" value="1"/>
</dbReference>
<dbReference type="FunFam" id="2.40.37.10:FF:000002">
    <property type="entry name" value="Alanine racemase"/>
    <property type="match status" value="1"/>
</dbReference>
<dbReference type="FunFam" id="3.20.20.10:FF:000002">
    <property type="entry name" value="Alanine racemase"/>
    <property type="match status" value="1"/>
</dbReference>
<dbReference type="Gene3D" id="3.20.20.10">
    <property type="entry name" value="Alanine racemase"/>
    <property type="match status" value="1"/>
</dbReference>
<dbReference type="Gene3D" id="2.40.37.10">
    <property type="entry name" value="Lyase, Ornithine Decarboxylase, Chain A, domain 1"/>
    <property type="match status" value="1"/>
</dbReference>
<dbReference type="HAMAP" id="MF_01201">
    <property type="entry name" value="Ala_racemase"/>
    <property type="match status" value="1"/>
</dbReference>
<dbReference type="InterPro" id="IPR000821">
    <property type="entry name" value="Ala_racemase"/>
</dbReference>
<dbReference type="InterPro" id="IPR009006">
    <property type="entry name" value="Ala_racemase/Decarboxylase_C"/>
</dbReference>
<dbReference type="InterPro" id="IPR011079">
    <property type="entry name" value="Ala_racemase_C"/>
</dbReference>
<dbReference type="InterPro" id="IPR001608">
    <property type="entry name" value="Ala_racemase_N"/>
</dbReference>
<dbReference type="InterPro" id="IPR020622">
    <property type="entry name" value="Ala_racemase_pyridoxalP-BS"/>
</dbReference>
<dbReference type="InterPro" id="IPR029066">
    <property type="entry name" value="PLP-binding_barrel"/>
</dbReference>
<dbReference type="NCBIfam" id="TIGR00492">
    <property type="entry name" value="alr"/>
    <property type="match status" value="1"/>
</dbReference>
<dbReference type="NCBIfam" id="NF002970">
    <property type="entry name" value="PRK03646.1"/>
    <property type="match status" value="1"/>
</dbReference>
<dbReference type="PANTHER" id="PTHR30511">
    <property type="entry name" value="ALANINE RACEMASE"/>
    <property type="match status" value="1"/>
</dbReference>
<dbReference type="PANTHER" id="PTHR30511:SF0">
    <property type="entry name" value="ALANINE RACEMASE, CATABOLIC-RELATED"/>
    <property type="match status" value="1"/>
</dbReference>
<dbReference type="Pfam" id="PF00842">
    <property type="entry name" value="Ala_racemase_C"/>
    <property type="match status" value="1"/>
</dbReference>
<dbReference type="Pfam" id="PF01168">
    <property type="entry name" value="Ala_racemase_N"/>
    <property type="match status" value="1"/>
</dbReference>
<dbReference type="PRINTS" id="PR00992">
    <property type="entry name" value="ALARACEMASE"/>
</dbReference>
<dbReference type="SMART" id="SM01005">
    <property type="entry name" value="Ala_racemase_C"/>
    <property type="match status" value="1"/>
</dbReference>
<dbReference type="SUPFAM" id="SSF50621">
    <property type="entry name" value="Alanine racemase C-terminal domain-like"/>
    <property type="match status" value="1"/>
</dbReference>
<dbReference type="SUPFAM" id="SSF51419">
    <property type="entry name" value="PLP-binding barrel"/>
    <property type="match status" value="1"/>
</dbReference>
<dbReference type="PROSITE" id="PS00395">
    <property type="entry name" value="ALANINE_RACEMASE"/>
    <property type="match status" value="1"/>
</dbReference>